<reference key="1">
    <citation type="journal article" date="1994" name="Gene">
        <title>Identification and characterization of a cDNA encoding ribosomal protein S12 from Xenopus laevis.</title>
        <authorList>
            <person name="Seery L.T."/>
            <person name="Schoenberg D.R."/>
            <person name="Canning M.E."/>
            <person name="Whitehead A.S."/>
        </authorList>
    </citation>
    <scope>NUCLEOTIDE SEQUENCE [MRNA]</scope>
    <source>
        <tissue>Liver</tissue>
    </source>
</reference>
<protein>
    <recommendedName>
        <fullName evidence="2">Small ribosomal subunit protein eS12</fullName>
    </recommendedName>
    <alternativeName>
        <fullName>40S ribosomal protein S12</fullName>
    </alternativeName>
</protein>
<feature type="initiator methionine" description="Removed" evidence="1">
    <location>
        <position position="1"/>
    </location>
</feature>
<feature type="chain" id="PRO_0000122328" description="Small ribosomal subunit protein eS12">
    <location>
        <begin position="2"/>
        <end position="132"/>
    </location>
</feature>
<name>RS12_XENLA</name>
<keyword id="KW-0963">Cytoplasm</keyword>
<keyword id="KW-1185">Reference proteome</keyword>
<keyword id="KW-0687">Ribonucleoprotein</keyword>
<keyword id="KW-0689">Ribosomal protein</keyword>
<dbReference type="EMBL" id="L32600">
    <property type="protein sequence ID" value="AAA67059.1"/>
    <property type="molecule type" value="mRNA"/>
</dbReference>
<dbReference type="PIR" id="I51557">
    <property type="entry name" value="I51557"/>
</dbReference>
<dbReference type="SMR" id="P47840"/>
<dbReference type="AGR" id="Xenbase:XB-GENE-972806"/>
<dbReference type="Xenbase" id="XB-GENE-972806">
    <property type="gene designation" value="rps12.S"/>
</dbReference>
<dbReference type="Proteomes" id="UP000186698">
    <property type="component" value="Unplaced"/>
</dbReference>
<dbReference type="GO" id="GO:0022627">
    <property type="term" value="C:cytosolic small ribosomal subunit"/>
    <property type="evidence" value="ECO:0000318"/>
    <property type="project" value="GO_Central"/>
</dbReference>
<dbReference type="GO" id="GO:0003735">
    <property type="term" value="F:structural constituent of ribosome"/>
    <property type="evidence" value="ECO:0000318"/>
    <property type="project" value="GO_Central"/>
</dbReference>
<dbReference type="GO" id="GO:1990145">
    <property type="term" value="P:maintenance of translational fidelity"/>
    <property type="evidence" value="ECO:0000318"/>
    <property type="project" value="GO_Central"/>
</dbReference>
<dbReference type="GO" id="GO:0042274">
    <property type="term" value="P:ribosomal small subunit biogenesis"/>
    <property type="evidence" value="ECO:0000318"/>
    <property type="project" value="GO_Central"/>
</dbReference>
<dbReference type="FunFam" id="3.30.1330.30:FF:000011">
    <property type="entry name" value="40S ribosomal protein S12"/>
    <property type="match status" value="1"/>
</dbReference>
<dbReference type="Gene3D" id="3.30.1330.30">
    <property type="match status" value="1"/>
</dbReference>
<dbReference type="InterPro" id="IPR029064">
    <property type="entry name" value="Ribosomal_eL30-like_sf"/>
</dbReference>
<dbReference type="InterPro" id="IPR004038">
    <property type="entry name" value="Ribosomal_eL8/eL30/eS12/Gad45"/>
</dbReference>
<dbReference type="InterPro" id="IPR000530">
    <property type="entry name" value="Ribosomal_eS12"/>
</dbReference>
<dbReference type="InterPro" id="IPR047860">
    <property type="entry name" value="Ribosomal_eS12_CS"/>
</dbReference>
<dbReference type="PANTHER" id="PTHR11843">
    <property type="entry name" value="40S RIBOSOMAL PROTEIN S12"/>
    <property type="match status" value="1"/>
</dbReference>
<dbReference type="Pfam" id="PF01248">
    <property type="entry name" value="Ribosomal_L7Ae"/>
    <property type="match status" value="1"/>
</dbReference>
<dbReference type="PRINTS" id="PR00972">
    <property type="entry name" value="RIBSOMALS12E"/>
</dbReference>
<dbReference type="SUPFAM" id="SSF55315">
    <property type="entry name" value="L30e-like"/>
    <property type="match status" value="1"/>
</dbReference>
<dbReference type="PROSITE" id="PS01189">
    <property type="entry name" value="RIBOSOMAL_S12E"/>
    <property type="match status" value="1"/>
</dbReference>
<sequence length="132" mass="14501">MAEEGISAGGVMDVNTALQEVLKTALIHDGLARGIREAAKALDKRQAHLCVLASNCDEPMYVKLVEALCAEPQINLIKVDDNKKLGEWVGLCKIDREGKPRKVVGCSCVVVKDYGKESQAKDVIEEYFKIKK</sequence>
<evidence type="ECO:0000250" key="1"/>
<evidence type="ECO:0000305" key="2"/>
<proteinExistence type="evidence at transcript level"/>
<accession>P47840</accession>
<comment type="subcellular location">
    <subcellularLocation>
        <location>Cytoplasm</location>
    </subcellularLocation>
</comment>
<comment type="similarity">
    <text evidence="2">Belongs to the eukaryotic ribosomal protein eS12 family.</text>
</comment>
<organism>
    <name type="scientific">Xenopus laevis</name>
    <name type="common">African clawed frog</name>
    <dbReference type="NCBI Taxonomy" id="8355"/>
    <lineage>
        <taxon>Eukaryota</taxon>
        <taxon>Metazoa</taxon>
        <taxon>Chordata</taxon>
        <taxon>Craniata</taxon>
        <taxon>Vertebrata</taxon>
        <taxon>Euteleostomi</taxon>
        <taxon>Amphibia</taxon>
        <taxon>Batrachia</taxon>
        <taxon>Anura</taxon>
        <taxon>Pipoidea</taxon>
        <taxon>Pipidae</taxon>
        <taxon>Xenopodinae</taxon>
        <taxon>Xenopus</taxon>
        <taxon>Xenopus</taxon>
    </lineage>
</organism>
<gene>
    <name type="primary">rps12</name>
</gene>